<sequence>MEQIDKQKIADAVKVILEAVGENPEREGLIDTPMRVARMYEEVFAGLKKDPSVHFDTIFEEQHEELVLVKDIRFSSMCEHHLVPFFGVAHVAYLPQNGRVAGLSKLARVVDDVSRRPQLQERITTTVAEIMMEKLKPLGVMVIMEAEHMCMTIRGVNKPGTKTITSAVRGAFKNDDKLRSEVLALIKHN</sequence>
<feature type="chain" id="PRO_0000119420" description="GTP cyclohydrolase 1">
    <location>
        <begin position="1"/>
        <end position="189"/>
    </location>
</feature>
<feature type="binding site" evidence="2">
    <location>
        <position position="78"/>
    </location>
    <ligand>
        <name>Zn(2+)</name>
        <dbReference type="ChEBI" id="CHEBI:29105"/>
    </ligand>
</feature>
<feature type="binding site" evidence="2">
    <location>
        <position position="81"/>
    </location>
    <ligand>
        <name>Zn(2+)</name>
        <dbReference type="ChEBI" id="CHEBI:29105"/>
    </ligand>
</feature>
<feature type="binding site" evidence="2">
    <location>
        <position position="150"/>
    </location>
    <ligand>
        <name>Zn(2+)</name>
        <dbReference type="ChEBI" id="CHEBI:29105"/>
    </ligand>
</feature>
<protein>
    <recommendedName>
        <fullName evidence="2">GTP cyclohydrolase 1</fullName>
        <ecNumber evidence="2">3.5.4.16</ecNumber>
    </recommendedName>
    <alternativeName>
        <fullName evidence="2">GTP cyclohydrolase I</fullName>
        <shortName evidence="2">GTP-CH-I</shortName>
    </alternativeName>
</protein>
<accession>Q71Y82</accession>
<gene>
    <name evidence="2" type="primary">folE</name>
    <name type="ordered locus">LMOf2365_1962</name>
</gene>
<dbReference type="EC" id="3.5.4.16" evidence="2"/>
<dbReference type="EMBL" id="AE017262">
    <property type="protein sequence ID" value="AAT04732.1"/>
    <property type="molecule type" value="Genomic_DNA"/>
</dbReference>
<dbReference type="RefSeq" id="WP_003727998.1">
    <property type="nucleotide sequence ID" value="NC_002973.6"/>
</dbReference>
<dbReference type="SMR" id="Q71Y82"/>
<dbReference type="KEGG" id="lmf:LMOf2365_1962"/>
<dbReference type="HOGENOM" id="CLU_049768_3_3_9"/>
<dbReference type="UniPathway" id="UPA00848">
    <property type="reaction ID" value="UER00151"/>
</dbReference>
<dbReference type="GO" id="GO:0005737">
    <property type="term" value="C:cytoplasm"/>
    <property type="evidence" value="ECO:0007669"/>
    <property type="project" value="TreeGrafter"/>
</dbReference>
<dbReference type="GO" id="GO:0005525">
    <property type="term" value="F:GTP binding"/>
    <property type="evidence" value="ECO:0007669"/>
    <property type="project" value="UniProtKB-KW"/>
</dbReference>
<dbReference type="GO" id="GO:0003934">
    <property type="term" value="F:GTP cyclohydrolase I activity"/>
    <property type="evidence" value="ECO:0007669"/>
    <property type="project" value="UniProtKB-UniRule"/>
</dbReference>
<dbReference type="GO" id="GO:0008270">
    <property type="term" value="F:zinc ion binding"/>
    <property type="evidence" value="ECO:0007669"/>
    <property type="project" value="UniProtKB-UniRule"/>
</dbReference>
<dbReference type="GO" id="GO:0006730">
    <property type="term" value="P:one-carbon metabolic process"/>
    <property type="evidence" value="ECO:0007669"/>
    <property type="project" value="UniProtKB-UniRule"/>
</dbReference>
<dbReference type="GO" id="GO:0006729">
    <property type="term" value="P:tetrahydrobiopterin biosynthetic process"/>
    <property type="evidence" value="ECO:0007669"/>
    <property type="project" value="TreeGrafter"/>
</dbReference>
<dbReference type="GO" id="GO:0046654">
    <property type="term" value="P:tetrahydrofolate biosynthetic process"/>
    <property type="evidence" value="ECO:0007669"/>
    <property type="project" value="UniProtKB-UniRule"/>
</dbReference>
<dbReference type="FunFam" id="1.10.286.10:FF:000001">
    <property type="entry name" value="GTP cyclohydrolase 1"/>
    <property type="match status" value="1"/>
</dbReference>
<dbReference type="FunFam" id="3.30.1130.10:FF:000001">
    <property type="entry name" value="GTP cyclohydrolase 1"/>
    <property type="match status" value="1"/>
</dbReference>
<dbReference type="Gene3D" id="1.10.286.10">
    <property type="match status" value="1"/>
</dbReference>
<dbReference type="Gene3D" id="3.30.1130.10">
    <property type="match status" value="1"/>
</dbReference>
<dbReference type="HAMAP" id="MF_00223">
    <property type="entry name" value="FolE"/>
    <property type="match status" value="1"/>
</dbReference>
<dbReference type="InterPro" id="IPR043133">
    <property type="entry name" value="GTP-CH-I_C/QueF"/>
</dbReference>
<dbReference type="InterPro" id="IPR043134">
    <property type="entry name" value="GTP-CH-I_N"/>
</dbReference>
<dbReference type="InterPro" id="IPR001474">
    <property type="entry name" value="GTP_CycHdrlase_I"/>
</dbReference>
<dbReference type="InterPro" id="IPR018234">
    <property type="entry name" value="GTP_CycHdrlase_I_CS"/>
</dbReference>
<dbReference type="InterPro" id="IPR020602">
    <property type="entry name" value="GTP_CycHdrlase_I_dom"/>
</dbReference>
<dbReference type="NCBIfam" id="TIGR00063">
    <property type="entry name" value="folE"/>
    <property type="match status" value="1"/>
</dbReference>
<dbReference type="NCBIfam" id="NF006825">
    <property type="entry name" value="PRK09347.1-2"/>
    <property type="match status" value="1"/>
</dbReference>
<dbReference type="NCBIfam" id="NF006826">
    <property type="entry name" value="PRK09347.1-3"/>
    <property type="match status" value="1"/>
</dbReference>
<dbReference type="PANTHER" id="PTHR11109:SF7">
    <property type="entry name" value="GTP CYCLOHYDROLASE 1"/>
    <property type="match status" value="1"/>
</dbReference>
<dbReference type="PANTHER" id="PTHR11109">
    <property type="entry name" value="GTP CYCLOHYDROLASE I"/>
    <property type="match status" value="1"/>
</dbReference>
<dbReference type="Pfam" id="PF01227">
    <property type="entry name" value="GTP_cyclohydroI"/>
    <property type="match status" value="1"/>
</dbReference>
<dbReference type="SUPFAM" id="SSF55620">
    <property type="entry name" value="Tetrahydrobiopterin biosynthesis enzymes-like"/>
    <property type="match status" value="1"/>
</dbReference>
<dbReference type="PROSITE" id="PS00859">
    <property type="entry name" value="GTP_CYCLOHYDROL_1_1"/>
    <property type="match status" value="1"/>
</dbReference>
<dbReference type="PROSITE" id="PS00860">
    <property type="entry name" value="GTP_CYCLOHYDROL_1_2"/>
    <property type="match status" value="1"/>
</dbReference>
<organism>
    <name type="scientific">Listeria monocytogenes serotype 4b (strain F2365)</name>
    <dbReference type="NCBI Taxonomy" id="265669"/>
    <lineage>
        <taxon>Bacteria</taxon>
        <taxon>Bacillati</taxon>
        <taxon>Bacillota</taxon>
        <taxon>Bacilli</taxon>
        <taxon>Bacillales</taxon>
        <taxon>Listeriaceae</taxon>
        <taxon>Listeria</taxon>
    </lineage>
</organism>
<name>GCH1_LISMF</name>
<keyword id="KW-0342">GTP-binding</keyword>
<keyword id="KW-0378">Hydrolase</keyword>
<keyword id="KW-0479">Metal-binding</keyword>
<keyword id="KW-0547">Nucleotide-binding</keyword>
<keyword id="KW-0554">One-carbon metabolism</keyword>
<keyword id="KW-0862">Zinc</keyword>
<comment type="catalytic activity">
    <reaction evidence="2">
        <text>GTP + H2O = 7,8-dihydroneopterin 3'-triphosphate + formate + H(+)</text>
        <dbReference type="Rhea" id="RHEA:17473"/>
        <dbReference type="ChEBI" id="CHEBI:15377"/>
        <dbReference type="ChEBI" id="CHEBI:15378"/>
        <dbReference type="ChEBI" id="CHEBI:15740"/>
        <dbReference type="ChEBI" id="CHEBI:37565"/>
        <dbReference type="ChEBI" id="CHEBI:58462"/>
        <dbReference type="EC" id="3.5.4.16"/>
    </reaction>
</comment>
<comment type="pathway">
    <text evidence="2">Cofactor biosynthesis; 7,8-dihydroneopterin triphosphate biosynthesis; 7,8-dihydroneopterin triphosphate from GTP: step 1/1.</text>
</comment>
<comment type="subunit">
    <text evidence="1">Toroid-shaped homodecamer, composed of two pentamers of five dimers.</text>
</comment>
<comment type="similarity">
    <text evidence="2">Belongs to the GTP cyclohydrolase I family.</text>
</comment>
<proteinExistence type="inferred from homology"/>
<evidence type="ECO:0000250" key="1"/>
<evidence type="ECO:0000255" key="2">
    <source>
        <dbReference type="HAMAP-Rule" id="MF_00223"/>
    </source>
</evidence>
<reference key="1">
    <citation type="journal article" date="2004" name="Nucleic Acids Res.">
        <title>Whole genome comparisons of serotype 4b and 1/2a strains of the food-borne pathogen Listeria monocytogenes reveal new insights into the core genome components of this species.</title>
        <authorList>
            <person name="Nelson K.E."/>
            <person name="Fouts D.E."/>
            <person name="Mongodin E.F."/>
            <person name="Ravel J."/>
            <person name="DeBoy R.T."/>
            <person name="Kolonay J.F."/>
            <person name="Rasko D.A."/>
            <person name="Angiuoli S.V."/>
            <person name="Gill S.R."/>
            <person name="Paulsen I.T."/>
            <person name="Peterson J.D."/>
            <person name="White O."/>
            <person name="Nelson W.C."/>
            <person name="Nierman W.C."/>
            <person name="Beanan M.J."/>
            <person name="Brinkac L.M."/>
            <person name="Daugherty S.C."/>
            <person name="Dodson R.J."/>
            <person name="Durkin A.S."/>
            <person name="Madupu R."/>
            <person name="Haft D.H."/>
            <person name="Selengut J."/>
            <person name="Van Aken S.E."/>
            <person name="Khouri H.M."/>
            <person name="Fedorova N."/>
            <person name="Forberger H.A."/>
            <person name="Tran B."/>
            <person name="Kathariou S."/>
            <person name="Wonderling L.D."/>
            <person name="Uhlich G.A."/>
            <person name="Bayles D.O."/>
            <person name="Luchansky J.B."/>
            <person name="Fraser C.M."/>
        </authorList>
    </citation>
    <scope>NUCLEOTIDE SEQUENCE [LARGE SCALE GENOMIC DNA]</scope>
    <source>
        <strain>F2365</strain>
    </source>
</reference>